<name>Y057_BUCAP</name>
<sequence>MKKKLINFKNALVLVVGDLILDCYWYSKNYYVVLEESLPIASINKIKKQPGGAANVAKNIAEIGGNSKIIGFIGMDYEGLTLKKLLNHTRIYPDLISIKKNKTITKIRILSEKKQLIRLDFQEKYISKKFNLLYEKIISSLTYYKVLVLSDYAKGTLVNVKKIITLAKKMSIPILIDPKGLDFKKYSGATLLTPNLSEFEQIVGKCHQEKQILQRGIKLVSELNLSALLVTRSKNGMTLFQPEKQPIHFPALSKTASDVTGAGDTVISIIASSLATGYSLEEACFYANVGASIVIQKIGTETLTINQLNTVLNI</sequence>
<dbReference type="EC" id="2.7.1.-"/>
<dbReference type="EMBL" id="AE013218">
    <property type="protein sequence ID" value="AAM67628.1"/>
    <property type="molecule type" value="Genomic_DNA"/>
</dbReference>
<dbReference type="RefSeq" id="WP_011053594.1">
    <property type="nucleotide sequence ID" value="NC_004061.1"/>
</dbReference>
<dbReference type="SMR" id="Q8KA54"/>
<dbReference type="STRING" id="198804.BUsg_057"/>
<dbReference type="GeneID" id="93003524"/>
<dbReference type="KEGG" id="bas:BUsg_057"/>
<dbReference type="eggNOG" id="COG2870">
    <property type="taxonomic scope" value="Bacteria"/>
</dbReference>
<dbReference type="HOGENOM" id="CLU_021150_0_1_6"/>
<dbReference type="Proteomes" id="UP000000416">
    <property type="component" value="Chromosome"/>
</dbReference>
<dbReference type="GO" id="GO:0005829">
    <property type="term" value="C:cytosol"/>
    <property type="evidence" value="ECO:0007669"/>
    <property type="project" value="TreeGrafter"/>
</dbReference>
<dbReference type="GO" id="GO:0033785">
    <property type="term" value="F:heptose 7-phosphate kinase activity"/>
    <property type="evidence" value="ECO:0007669"/>
    <property type="project" value="TreeGrafter"/>
</dbReference>
<dbReference type="GO" id="GO:0033786">
    <property type="term" value="F:heptose-1-phosphate adenylyltransferase activity"/>
    <property type="evidence" value="ECO:0007669"/>
    <property type="project" value="TreeGrafter"/>
</dbReference>
<dbReference type="GO" id="GO:0016773">
    <property type="term" value="F:phosphotransferase activity, alcohol group as acceptor"/>
    <property type="evidence" value="ECO:0007669"/>
    <property type="project" value="InterPro"/>
</dbReference>
<dbReference type="CDD" id="cd01172">
    <property type="entry name" value="RfaE_like"/>
    <property type="match status" value="1"/>
</dbReference>
<dbReference type="FunFam" id="3.40.1190.20:FF:000002">
    <property type="entry name" value="Bifunctional protein HldE"/>
    <property type="match status" value="1"/>
</dbReference>
<dbReference type="Gene3D" id="3.40.1190.20">
    <property type="match status" value="1"/>
</dbReference>
<dbReference type="InterPro" id="IPR002173">
    <property type="entry name" value="Carboh/pur_kinase_PfkB_CS"/>
</dbReference>
<dbReference type="InterPro" id="IPR011611">
    <property type="entry name" value="PfkB_dom"/>
</dbReference>
<dbReference type="InterPro" id="IPR011913">
    <property type="entry name" value="RfaE_dom_I"/>
</dbReference>
<dbReference type="InterPro" id="IPR029056">
    <property type="entry name" value="Ribokinase-like"/>
</dbReference>
<dbReference type="NCBIfam" id="TIGR02198">
    <property type="entry name" value="rfaE_dom_I"/>
    <property type="match status" value="1"/>
</dbReference>
<dbReference type="PANTHER" id="PTHR46969">
    <property type="entry name" value="BIFUNCTIONAL PROTEIN HLDE"/>
    <property type="match status" value="1"/>
</dbReference>
<dbReference type="PANTHER" id="PTHR46969:SF1">
    <property type="entry name" value="BIFUNCTIONAL PROTEIN HLDE"/>
    <property type="match status" value="1"/>
</dbReference>
<dbReference type="Pfam" id="PF00294">
    <property type="entry name" value="PfkB"/>
    <property type="match status" value="1"/>
</dbReference>
<dbReference type="SUPFAM" id="SSF53613">
    <property type="entry name" value="Ribokinase-like"/>
    <property type="match status" value="1"/>
</dbReference>
<dbReference type="PROSITE" id="PS00583">
    <property type="entry name" value="PFKB_KINASES_1"/>
    <property type="match status" value="1"/>
</dbReference>
<protein>
    <recommendedName>
        <fullName>Uncharacterized sugar kinase BUsg_057</fullName>
        <ecNumber>2.7.1.-</ecNumber>
    </recommendedName>
</protein>
<organism>
    <name type="scientific">Buchnera aphidicola subsp. Schizaphis graminum (strain Sg)</name>
    <dbReference type="NCBI Taxonomy" id="198804"/>
    <lineage>
        <taxon>Bacteria</taxon>
        <taxon>Pseudomonadati</taxon>
        <taxon>Pseudomonadota</taxon>
        <taxon>Gammaproteobacteria</taxon>
        <taxon>Enterobacterales</taxon>
        <taxon>Erwiniaceae</taxon>
        <taxon>Buchnera</taxon>
    </lineage>
</organism>
<evidence type="ECO:0000305" key="1"/>
<proteinExistence type="inferred from homology"/>
<feature type="chain" id="PRO_0000080143" description="Uncharacterized sugar kinase BUsg_057">
    <location>
        <begin position="1"/>
        <end position="314"/>
    </location>
</feature>
<comment type="similarity">
    <text evidence="1">Belongs to the carbohydrate kinase PfkB family.</text>
</comment>
<accession>Q8KA54</accession>
<gene>
    <name type="ordered locus">BUsg_057</name>
</gene>
<keyword id="KW-0418">Kinase</keyword>
<keyword id="KW-0808">Transferase</keyword>
<reference key="1">
    <citation type="journal article" date="2002" name="Science">
        <title>50 million years of genomic stasis in endosymbiotic bacteria.</title>
        <authorList>
            <person name="Tamas I."/>
            <person name="Klasson L."/>
            <person name="Canbaeck B."/>
            <person name="Naeslund A.K."/>
            <person name="Eriksson A.-S."/>
            <person name="Wernegreen J.J."/>
            <person name="Sandstroem J.P."/>
            <person name="Moran N.A."/>
            <person name="Andersson S.G.E."/>
        </authorList>
    </citation>
    <scope>NUCLEOTIDE SEQUENCE [LARGE SCALE GENOMIC DNA]</scope>
    <source>
        <strain>Sg</strain>
    </source>
</reference>